<reference key="1">
    <citation type="journal article" date="1994" name="J. Bacteriol.">
        <title>Trehalose-6-phosphate hydrolase of Escherichia coli.</title>
        <authorList>
            <person name="Rimmele M."/>
            <person name="Boos W."/>
        </authorList>
    </citation>
    <scope>NUCLEOTIDE SEQUENCE [GENOMIC DNA]</scope>
    <scope>FUNCTION</scope>
    <scope>CATALYTIC ACTIVITY</scope>
    <scope>BIOPHYSICOCHEMICAL PROPERTIES</scope>
    <scope>SUBCELLULAR LOCATION</scope>
    <source>
        <strain>K12</strain>
    </source>
</reference>
<reference key="2">
    <citation type="journal article" date="1995" name="Nucleic Acids Res.">
        <title>Analysis of the Escherichia coli genome VI: DNA sequence of the region from 92.8 through 100 minutes.</title>
        <authorList>
            <person name="Burland V.D."/>
            <person name="Plunkett G. III"/>
            <person name="Sofia H.J."/>
            <person name="Daniels D.L."/>
            <person name="Blattner F.R."/>
        </authorList>
    </citation>
    <scope>NUCLEOTIDE SEQUENCE [LARGE SCALE GENOMIC DNA]</scope>
    <source>
        <strain>K12 / MG1655 / ATCC 47076</strain>
    </source>
</reference>
<reference key="3">
    <citation type="journal article" date="1997" name="Science">
        <title>The complete genome sequence of Escherichia coli K-12.</title>
        <authorList>
            <person name="Blattner F.R."/>
            <person name="Plunkett G. III"/>
            <person name="Bloch C.A."/>
            <person name="Perna N.T."/>
            <person name="Burland V."/>
            <person name="Riley M."/>
            <person name="Collado-Vides J."/>
            <person name="Glasner J.D."/>
            <person name="Rode C.K."/>
            <person name="Mayhew G.F."/>
            <person name="Gregor J."/>
            <person name="Davis N.W."/>
            <person name="Kirkpatrick H.A."/>
            <person name="Goeden M.A."/>
            <person name="Rose D.J."/>
            <person name="Mau B."/>
            <person name="Shao Y."/>
        </authorList>
    </citation>
    <scope>NUCLEOTIDE SEQUENCE [LARGE SCALE GENOMIC DNA]</scope>
    <source>
        <strain>K12 / MG1655 / ATCC 47076</strain>
    </source>
</reference>
<reference key="4">
    <citation type="journal article" date="2006" name="Mol. Syst. Biol.">
        <title>Highly accurate genome sequences of Escherichia coli K-12 strains MG1655 and W3110.</title>
        <authorList>
            <person name="Hayashi K."/>
            <person name="Morooka N."/>
            <person name="Yamamoto Y."/>
            <person name="Fujita K."/>
            <person name="Isono K."/>
            <person name="Choi S."/>
            <person name="Ohtsubo E."/>
            <person name="Baba T."/>
            <person name="Wanner B.L."/>
            <person name="Mori H."/>
            <person name="Horiuchi T."/>
        </authorList>
    </citation>
    <scope>NUCLEOTIDE SEQUENCE [LARGE SCALE GENOMIC DNA]</scope>
    <source>
        <strain>K12 / W3110 / ATCC 27325 / DSM 5911</strain>
    </source>
</reference>
<reference key="5">
    <citation type="journal article" date="1993" name="Proc. Natl. Acad. Sci. U.S.A.">
        <title>A possible glycine radical in anaerobic ribonucleotide reductase from Escherichia coli: nucleotide sequence of the cloned nrdD gene.</title>
        <authorList>
            <person name="Sun X."/>
            <person name="Harder J."/>
            <person name="Krook M."/>
            <person name="Joernvall H."/>
            <person name="Sjoeberg B.-M."/>
            <person name="Reichard P."/>
        </authorList>
    </citation>
    <scope>NUCLEOTIDE SEQUENCE [GENOMIC DNA] OF 160-392</scope>
    <source>
        <strain>K12 / W3110 / ATCC 27325 / DSM 5911</strain>
    </source>
</reference>
<proteinExistence type="evidence at protein level"/>
<gene>
    <name type="primary">treC</name>
    <name type="synonym">olgH</name>
    <name type="ordered locus">b4239</name>
    <name type="ordered locus">JW4198</name>
</gene>
<sequence>MTHLPHWWQNGVIYQIYPKSFQDTTGSGTGDLRGVIQHLDYLHKLGVDAIWLTPFYVSPQVDNGYDVANYTAIDPTYGTLDDFDELVTQAKSRGIRIILDMVFNHTSTQHAWFREALNKESPYRQFYIWRDGEPETPPNNWRSKFGGSAWRWHAESEQYYLHLFAPEQADLNWENPAVRAELKKVCEFWADRGVDGLRLDVVNLISKDPRFPEDLDGDGRRFYTDGPRAHEFLHEMNRDVFTPRGLMTVGEMSSTSLEHCQRYAALTGSELSMTFNFHHLKVDYPGGEKWTLAKPDFVALKTLFRHWQQGMHNVAWNALFWCNHDQPRIVSRFGDEGEYRVPAAKMLAMVLHGMQGTPYIYQGEEIGMTNPHFTRITDYRDVESLNMFAELRNDGRDADELLAILASKSRDNSRTPMQWSNGDNAGFTAGEPWIGLGDNYQQINVEAALADDSSVFYTYQKLIALRKQEAILTWGNYQDLLPNSPVLWCYRREWKGQTLLVIANLSREIQPWQAGQMRGNWQLVMHNYEEASPQPCAMNLRPFEAVWWLQK</sequence>
<organism>
    <name type="scientific">Escherichia coli (strain K12)</name>
    <dbReference type="NCBI Taxonomy" id="83333"/>
    <lineage>
        <taxon>Bacteria</taxon>
        <taxon>Pseudomonadati</taxon>
        <taxon>Pseudomonadota</taxon>
        <taxon>Gammaproteobacteria</taxon>
        <taxon>Enterobacterales</taxon>
        <taxon>Enterobacteriaceae</taxon>
        <taxon>Escherichia</taxon>
    </lineage>
</organism>
<comment type="function">
    <text evidence="2">Hydrolyzes trehalose-6-phosphate to glucose and glucose 6-phosphate. Can also very effectively hydrolyze p-nitrophenyl-alpha-D-glucopyranoside, but it does not recognize trehalose, sucrose, maltose, isomaltose, or maltodextrins.</text>
</comment>
<comment type="catalytic activity">
    <reaction evidence="2">
        <text>alpha,alpha-trehalose 6-phosphate + H2O = D-glucose 6-phosphate + D-glucose</text>
        <dbReference type="Rhea" id="RHEA:23008"/>
        <dbReference type="ChEBI" id="CHEBI:4167"/>
        <dbReference type="ChEBI" id="CHEBI:15377"/>
        <dbReference type="ChEBI" id="CHEBI:58429"/>
        <dbReference type="ChEBI" id="CHEBI:61548"/>
        <dbReference type="EC" id="3.2.1.93"/>
    </reaction>
</comment>
<comment type="biophysicochemical properties">
    <kinetics>
        <KM evidence="2">6 mM for trehalose-6-phosphate</KM>
        <Vmax evidence="2">5.5 umol/min/mg enzyme</Vmax>
    </kinetics>
</comment>
<comment type="subcellular location">
    <subcellularLocation>
        <location evidence="5">Cytoplasm</location>
    </subcellularLocation>
</comment>
<comment type="similarity">
    <text evidence="4">Belongs to the glycosyl hydrolase 13 family.</text>
</comment>
<protein>
    <recommendedName>
        <fullName evidence="3">Trehalose-6-phosphate hydrolase</fullName>
        <ecNumber evidence="2">3.2.1.93</ecNumber>
    </recommendedName>
    <alternativeName>
        <fullName>Alpha,alpha-phosphotrehalase</fullName>
    </alternativeName>
</protein>
<accession>P28904</accession>
<accession>Q2M668</accession>
<evidence type="ECO:0000250" key="1">
    <source>
        <dbReference type="UniProtKB" id="P00691"/>
    </source>
</evidence>
<evidence type="ECO:0000269" key="2">
    <source>
    </source>
</evidence>
<evidence type="ECO:0000303" key="3">
    <source>
    </source>
</evidence>
<evidence type="ECO:0000305" key="4"/>
<evidence type="ECO:0000305" key="5">
    <source>
    </source>
</evidence>
<keyword id="KW-0963">Cytoplasm</keyword>
<keyword id="KW-0326">Glycosidase</keyword>
<keyword id="KW-0378">Hydrolase</keyword>
<keyword id="KW-1185">Reference proteome</keyword>
<feature type="chain" id="PRO_0000054319" description="Trehalose-6-phosphate hydrolase">
    <location>
        <begin position="1"/>
        <end position="551"/>
    </location>
</feature>
<feature type="active site" description="Nucleophile" evidence="1">
    <location>
        <position position="200"/>
    </location>
</feature>
<feature type="active site" description="Proton donor" evidence="1">
    <location>
        <position position="251"/>
    </location>
</feature>
<feature type="site" description="Transition state stabilizer" evidence="1">
    <location>
        <position position="325"/>
    </location>
</feature>
<feature type="sequence conflict" description="In Ref. 1; AAC43382." evidence="4" ref="1">
    <original>D</original>
    <variation>V</variation>
    <location>
        <position position="74"/>
    </location>
</feature>
<name>TREC_ECOLI</name>
<dbReference type="EC" id="3.2.1.93" evidence="2"/>
<dbReference type="EMBL" id="U06195">
    <property type="protein sequence ID" value="AAC43382.1"/>
    <property type="molecule type" value="Genomic_DNA"/>
</dbReference>
<dbReference type="EMBL" id="U14003">
    <property type="protein sequence ID" value="AAA97136.1"/>
    <property type="molecule type" value="Genomic_DNA"/>
</dbReference>
<dbReference type="EMBL" id="U00096">
    <property type="protein sequence ID" value="AAC77196.1"/>
    <property type="molecule type" value="Genomic_DNA"/>
</dbReference>
<dbReference type="EMBL" id="AP009048">
    <property type="protein sequence ID" value="BAE78238.1"/>
    <property type="molecule type" value="Genomic_DNA"/>
</dbReference>
<dbReference type="EMBL" id="L06097">
    <property type="protein sequence ID" value="AAA24225.1"/>
    <property type="molecule type" value="Genomic_DNA"/>
</dbReference>
<dbReference type="PIR" id="S56465">
    <property type="entry name" value="S56465"/>
</dbReference>
<dbReference type="RefSeq" id="NP_418660.1">
    <property type="nucleotide sequence ID" value="NC_000913.3"/>
</dbReference>
<dbReference type="RefSeq" id="WP_001336303.1">
    <property type="nucleotide sequence ID" value="NZ_LN832404.1"/>
</dbReference>
<dbReference type="SMR" id="P28904"/>
<dbReference type="BioGRID" id="4259319">
    <property type="interactions" value="24"/>
</dbReference>
<dbReference type="BioGRID" id="853051">
    <property type="interactions" value="1"/>
</dbReference>
<dbReference type="DIP" id="DIP-11024N"/>
<dbReference type="FunCoup" id="P28904">
    <property type="interactions" value="555"/>
</dbReference>
<dbReference type="IntAct" id="P28904">
    <property type="interactions" value="8"/>
</dbReference>
<dbReference type="STRING" id="511145.b4239"/>
<dbReference type="CAZy" id="GH13">
    <property type="family name" value="Glycoside Hydrolase Family 13"/>
</dbReference>
<dbReference type="jPOST" id="P28904"/>
<dbReference type="PaxDb" id="511145-b4239"/>
<dbReference type="EnsemblBacteria" id="AAC77196">
    <property type="protein sequence ID" value="AAC77196"/>
    <property type="gene ID" value="b4239"/>
</dbReference>
<dbReference type="GeneID" id="948762"/>
<dbReference type="KEGG" id="ecj:JW4198"/>
<dbReference type="KEGG" id="eco:b4239"/>
<dbReference type="KEGG" id="ecoc:C3026_22880"/>
<dbReference type="PATRIC" id="fig|1411691.4.peg.2462"/>
<dbReference type="EchoBASE" id="EB1374"/>
<dbReference type="eggNOG" id="COG0366">
    <property type="taxonomic scope" value="Bacteria"/>
</dbReference>
<dbReference type="HOGENOM" id="CLU_006462_1_2_6"/>
<dbReference type="InParanoid" id="P28904"/>
<dbReference type="OMA" id="PNGEKWA"/>
<dbReference type="OrthoDB" id="9805159at2"/>
<dbReference type="PhylomeDB" id="P28904"/>
<dbReference type="BioCyc" id="EcoCyc:TRE6PHYDRO-MONOMER"/>
<dbReference type="BioCyc" id="MetaCyc:TRE6PHYDRO-MONOMER"/>
<dbReference type="SABIO-RK" id="P28904"/>
<dbReference type="PRO" id="PR:P28904"/>
<dbReference type="Proteomes" id="UP000000625">
    <property type="component" value="Chromosome"/>
</dbReference>
<dbReference type="GO" id="GO:0005829">
    <property type="term" value="C:cytosol"/>
    <property type="evidence" value="ECO:0000314"/>
    <property type="project" value="EcoCyc"/>
</dbReference>
<dbReference type="GO" id="GO:0008788">
    <property type="term" value="F:alpha,alpha-phosphotrehalase activity"/>
    <property type="evidence" value="ECO:0000314"/>
    <property type="project" value="EcoCyc"/>
</dbReference>
<dbReference type="GO" id="GO:0004556">
    <property type="term" value="F:alpha-amylase activity"/>
    <property type="evidence" value="ECO:0000318"/>
    <property type="project" value="GO_Central"/>
</dbReference>
<dbReference type="GO" id="GO:0006974">
    <property type="term" value="P:DNA damage response"/>
    <property type="evidence" value="ECO:0000270"/>
    <property type="project" value="EcoliWiki"/>
</dbReference>
<dbReference type="GO" id="GO:0009313">
    <property type="term" value="P:oligosaccharide catabolic process"/>
    <property type="evidence" value="ECO:0000318"/>
    <property type="project" value="GO_Central"/>
</dbReference>
<dbReference type="GO" id="GO:0005993">
    <property type="term" value="P:trehalose catabolic process"/>
    <property type="evidence" value="ECO:0000315"/>
    <property type="project" value="EcoCyc"/>
</dbReference>
<dbReference type="CDD" id="cd11333">
    <property type="entry name" value="AmyAc_SI_OligoGlu_DGase"/>
    <property type="match status" value="1"/>
</dbReference>
<dbReference type="FunFam" id="3.20.20.80:FF:000014">
    <property type="entry name" value="Alpha,alpha-phosphotrehalase"/>
    <property type="match status" value="1"/>
</dbReference>
<dbReference type="FunFam" id="2.60.40.1180:FF:000007">
    <property type="entry name" value="Sucrose isomerase"/>
    <property type="match status" value="1"/>
</dbReference>
<dbReference type="FunFam" id="3.90.400.10:FF:000002">
    <property type="entry name" value="Sucrose isomerase"/>
    <property type="match status" value="1"/>
</dbReference>
<dbReference type="Gene3D" id="3.20.20.80">
    <property type="entry name" value="Glycosidases"/>
    <property type="match status" value="1"/>
</dbReference>
<dbReference type="Gene3D" id="2.60.40.1180">
    <property type="entry name" value="Golgi alpha-mannosidase II"/>
    <property type="match status" value="1"/>
</dbReference>
<dbReference type="Gene3D" id="3.90.400.10">
    <property type="entry name" value="Oligo-1,6-glucosidase, Domain 2"/>
    <property type="match status" value="1"/>
</dbReference>
<dbReference type="InterPro" id="IPR022567">
    <property type="entry name" value="DUF3459"/>
</dbReference>
<dbReference type="InterPro" id="IPR006047">
    <property type="entry name" value="Glyco_hydro_13_cat_dom"/>
</dbReference>
<dbReference type="InterPro" id="IPR013780">
    <property type="entry name" value="Glyco_hydro_b"/>
</dbReference>
<dbReference type="InterPro" id="IPR017853">
    <property type="entry name" value="Glycoside_hydrolase_SF"/>
</dbReference>
<dbReference type="InterPro" id="IPR045857">
    <property type="entry name" value="O16G_dom_2"/>
</dbReference>
<dbReference type="InterPro" id="IPR012769">
    <property type="entry name" value="Trehalose_TreC"/>
</dbReference>
<dbReference type="NCBIfam" id="NF008183">
    <property type="entry name" value="PRK10933.1"/>
    <property type="match status" value="1"/>
</dbReference>
<dbReference type="NCBIfam" id="TIGR02403">
    <property type="entry name" value="trehalose_treC"/>
    <property type="match status" value="1"/>
</dbReference>
<dbReference type="PANTHER" id="PTHR10357">
    <property type="entry name" value="ALPHA-AMYLASE FAMILY MEMBER"/>
    <property type="match status" value="1"/>
</dbReference>
<dbReference type="PANTHER" id="PTHR10357:SF179">
    <property type="entry name" value="NEUTRAL AND BASIC AMINO ACID TRANSPORT PROTEIN RBAT"/>
    <property type="match status" value="1"/>
</dbReference>
<dbReference type="Pfam" id="PF00128">
    <property type="entry name" value="Alpha-amylase"/>
    <property type="match status" value="1"/>
</dbReference>
<dbReference type="Pfam" id="PF11941">
    <property type="entry name" value="DUF3459"/>
    <property type="match status" value="1"/>
</dbReference>
<dbReference type="SMART" id="SM00642">
    <property type="entry name" value="Aamy"/>
    <property type="match status" value="1"/>
</dbReference>
<dbReference type="SUPFAM" id="SSF51445">
    <property type="entry name" value="(Trans)glycosidases"/>
    <property type="match status" value="1"/>
</dbReference>
<dbReference type="SUPFAM" id="SSF51011">
    <property type="entry name" value="Glycosyl hydrolase domain"/>
    <property type="match status" value="1"/>
</dbReference>